<evidence type="ECO:0000255" key="1">
    <source>
        <dbReference type="HAMAP-Rule" id="MF_00210"/>
    </source>
</evidence>
<keyword id="KW-0028">Amino-acid biosynthesis</keyword>
<keyword id="KW-0057">Aromatic amino acid biosynthesis</keyword>
<keyword id="KW-0963">Cytoplasm</keyword>
<keyword id="KW-0808">Transferase</keyword>
<proteinExistence type="inferred from homology"/>
<name>AROA_BACFR</name>
<feature type="chain" id="PRO_1000099666" description="3-phosphoshikimate 1-carboxyvinyltransferase">
    <location>
        <begin position="1"/>
        <end position="410"/>
    </location>
</feature>
<feature type="active site" description="Proton acceptor" evidence="1">
    <location>
        <position position="288"/>
    </location>
</feature>
<feature type="binding site" evidence="1">
    <location>
        <position position="21"/>
    </location>
    <ligand>
        <name>3-phosphoshikimate</name>
        <dbReference type="ChEBI" id="CHEBI:145989"/>
    </ligand>
</feature>
<feature type="binding site" evidence="1">
    <location>
        <position position="21"/>
    </location>
    <ligand>
        <name>phosphoenolpyruvate</name>
        <dbReference type="ChEBI" id="CHEBI:58702"/>
    </ligand>
</feature>
<feature type="binding site" evidence="1">
    <location>
        <position position="22"/>
    </location>
    <ligand>
        <name>3-phosphoshikimate</name>
        <dbReference type="ChEBI" id="CHEBI:145989"/>
    </ligand>
</feature>
<feature type="binding site" evidence="1">
    <location>
        <position position="26"/>
    </location>
    <ligand>
        <name>3-phosphoshikimate</name>
        <dbReference type="ChEBI" id="CHEBI:145989"/>
    </ligand>
</feature>
<feature type="binding site" evidence="1">
    <location>
        <position position="69"/>
    </location>
    <ligand>
        <name>phosphoenolpyruvate</name>
        <dbReference type="ChEBI" id="CHEBI:58702"/>
    </ligand>
</feature>
<feature type="binding site" evidence="1">
    <location>
        <position position="97"/>
    </location>
    <ligand>
        <name>phosphoenolpyruvate</name>
        <dbReference type="ChEBI" id="CHEBI:58702"/>
    </ligand>
</feature>
<feature type="binding site" evidence="1">
    <location>
        <position position="143"/>
    </location>
    <ligand>
        <name>3-phosphoshikimate</name>
        <dbReference type="ChEBI" id="CHEBI:145989"/>
    </ligand>
</feature>
<feature type="binding site" evidence="1">
    <location>
        <position position="144"/>
    </location>
    <ligand>
        <name>3-phosphoshikimate</name>
        <dbReference type="ChEBI" id="CHEBI:145989"/>
    </ligand>
</feature>
<feature type="binding site" evidence="1">
    <location>
        <position position="145"/>
    </location>
    <ligand>
        <name>3-phosphoshikimate</name>
        <dbReference type="ChEBI" id="CHEBI:145989"/>
    </ligand>
</feature>
<feature type="binding site" evidence="1">
    <location>
        <position position="145"/>
    </location>
    <ligand>
        <name>phosphoenolpyruvate</name>
        <dbReference type="ChEBI" id="CHEBI:58702"/>
    </ligand>
</feature>
<feature type="binding site" evidence="1">
    <location>
        <position position="171"/>
    </location>
    <ligand>
        <name>3-phosphoshikimate</name>
        <dbReference type="ChEBI" id="CHEBI:145989"/>
    </ligand>
</feature>
<feature type="binding site" evidence="1">
    <location>
        <position position="288"/>
    </location>
    <ligand>
        <name>3-phosphoshikimate</name>
        <dbReference type="ChEBI" id="CHEBI:145989"/>
    </ligand>
</feature>
<feature type="binding site" evidence="1">
    <location>
        <position position="315"/>
    </location>
    <ligand>
        <name>3-phosphoshikimate</name>
        <dbReference type="ChEBI" id="CHEBI:145989"/>
    </ligand>
</feature>
<feature type="binding site" evidence="1">
    <location>
        <position position="319"/>
    </location>
    <ligand>
        <name>phosphoenolpyruvate</name>
        <dbReference type="ChEBI" id="CHEBI:58702"/>
    </ligand>
</feature>
<feature type="binding site" evidence="1">
    <location>
        <position position="364"/>
    </location>
    <ligand>
        <name>phosphoenolpyruvate</name>
        <dbReference type="ChEBI" id="CHEBI:58702"/>
    </ligand>
</feature>
<feature type="binding site" evidence="1">
    <location>
        <position position="389"/>
    </location>
    <ligand>
        <name>phosphoenolpyruvate</name>
        <dbReference type="ChEBI" id="CHEBI:58702"/>
    </ligand>
</feature>
<protein>
    <recommendedName>
        <fullName evidence="1">3-phosphoshikimate 1-carboxyvinyltransferase</fullName>
        <ecNumber evidence="1">2.5.1.19</ecNumber>
    </recommendedName>
    <alternativeName>
        <fullName evidence="1">5-enolpyruvylshikimate-3-phosphate synthase</fullName>
        <shortName evidence="1">EPSP synthase</shortName>
        <shortName evidence="1">EPSPS</shortName>
    </alternativeName>
</protein>
<comment type="function">
    <text evidence="1">Catalyzes the transfer of the enolpyruvyl moiety of phosphoenolpyruvate (PEP) to the 5-hydroxyl of shikimate-3-phosphate (S3P) to produce enolpyruvyl shikimate-3-phosphate and inorganic phosphate.</text>
</comment>
<comment type="catalytic activity">
    <reaction evidence="1">
        <text>3-phosphoshikimate + phosphoenolpyruvate = 5-O-(1-carboxyvinyl)-3-phosphoshikimate + phosphate</text>
        <dbReference type="Rhea" id="RHEA:21256"/>
        <dbReference type="ChEBI" id="CHEBI:43474"/>
        <dbReference type="ChEBI" id="CHEBI:57701"/>
        <dbReference type="ChEBI" id="CHEBI:58702"/>
        <dbReference type="ChEBI" id="CHEBI:145989"/>
        <dbReference type="EC" id="2.5.1.19"/>
    </reaction>
    <physiologicalReaction direction="left-to-right" evidence="1">
        <dbReference type="Rhea" id="RHEA:21257"/>
    </physiologicalReaction>
</comment>
<comment type="pathway">
    <text evidence="1">Metabolic intermediate biosynthesis; chorismate biosynthesis; chorismate from D-erythrose 4-phosphate and phosphoenolpyruvate: step 6/7.</text>
</comment>
<comment type="subunit">
    <text evidence="1">Monomer.</text>
</comment>
<comment type="subcellular location">
    <subcellularLocation>
        <location evidence="1">Cytoplasm</location>
    </subcellularLocation>
</comment>
<comment type="similarity">
    <text evidence="1">Belongs to the EPSP synthase family.</text>
</comment>
<organism>
    <name type="scientific">Bacteroides fragilis (strain YCH46)</name>
    <dbReference type="NCBI Taxonomy" id="295405"/>
    <lineage>
        <taxon>Bacteria</taxon>
        <taxon>Pseudomonadati</taxon>
        <taxon>Bacteroidota</taxon>
        <taxon>Bacteroidia</taxon>
        <taxon>Bacteroidales</taxon>
        <taxon>Bacteroidaceae</taxon>
        <taxon>Bacteroides</taxon>
    </lineage>
</organism>
<reference key="1">
    <citation type="journal article" date="2004" name="Proc. Natl. Acad. Sci. U.S.A.">
        <title>Genomic analysis of Bacteroides fragilis reveals extensive DNA inversions regulating cell surface adaptation.</title>
        <authorList>
            <person name="Kuwahara T."/>
            <person name="Yamashita A."/>
            <person name="Hirakawa H."/>
            <person name="Nakayama H."/>
            <person name="Toh H."/>
            <person name="Okada N."/>
            <person name="Kuhara S."/>
            <person name="Hattori M."/>
            <person name="Hayashi T."/>
            <person name="Ohnishi Y."/>
        </authorList>
    </citation>
    <scope>NUCLEOTIDE SEQUENCE [LARGE SCALE GENOMIC DNA]</scope>
    <source>
        <strain>YCH46</strain>
    </source>
</reference>
<accession>Q64YD8</accession>
<gene>
    <name evidence="1" type="primary">aroA</name>
    <name type="ordered locus">BF0737</name>
</gene>
<dbReference type="EC" id="2.5.1.19" evidence="1"/>
<dbReference type="EMBL" id="AP006841">
    <property type="protein sequence ID" value="BAD47488.1"/>
    <property type="molecule type" value="Genomic_DNA"/>
</dbReference>
<dbReference type="RefSeq" id="WP_011202121.1">
    <property type="nucleotide sequence ID" value="NC_006347.1"/>
</dbReference>
<dbReference type="RefSeq" id="YP_098022.1">
    <property type="nucleotide sequence ID" value="NC_006347.1"/>
</dbReference>
<dbReference type="SMR" id="Q64YD8"/>
<dbReference type="STRING" id="295405.BF0737"/>
<dbReference type="KEGG" id="bfr:BF0737"/>
<dbReference type="PATRIC" id="fig|295405.11.peg.749"/>
<dbReference type="HOGENOM" id="CLU_024321_0_0_10"/>
<dbReference type="OrthoDB" id="9809920at2"/>
<dbReference type="UniPathway" id="UPA00053">
    <property type="reaction ID" value="UER00089"/>
</dbReference>
<dbReference type="Proteomes" id="UP000002197">
    <property type="component" value="Chromosome"/>
</dbReference>
<dbReference type="GO" id="GO:0005737">
    <property type="term" value="C:cytoplasm"/>
    <property type="evidence" value="ECO:0007669"/>
    <property type="project" value="UniProtKB-SubCell"/>
</dbReference>
<dbReference type="GO" id="GO:0003866">
    <property type="term" value="F:3-phosphoshikimate 1-carboxyvinyltransferase activity"/>
    <property type="evidence" value="ECO:0007669"/>
    <property type="project" value="UniProtKB-UniRule"/>
</dbReference>
<dbReference type="GO" id="GO:0008652">
    <property type="term" value="P:amino acid biosynthetic process"/>
    <property type="evidence" value="ECO:0007669"/>
    <property type="project" value="UniProtKB-KW"/>
</dbReference>
<dbReference type="GO" id="GO:0009073">
    <property type="term" value="P:aromatic amino acid family biosynthetic process"/>
    <property type="evidence" value="ECO:0007669"/>
    <property type="project" value="UniProtKB-KW"/>
</dbReference>
<dbReference type="GO" id="GO:0009423">
    <property type="term" value="P:chorismate biosynthetic process"/>
    <property type="evidence" value="ECO:0007669"/>
    <property type="project" value="UniProtKB-UniRule"/>
</dbReference>
<dbReference type="CDD" id="cd01556">
    <property type="entry name" value="EPSP_synthase"/>
    <property type="match status" value="1"/>
</dbReference>
<dbReference type="Gene3D" id="3.65.10.10">
    <property type="entry name" value="Enolpyruvate transferase domain"/>
    <property type="match status" value="3"/>
</dbReference>
<dbReference type="HAMAP" id="MF_00210">
    <property type="entry name" value="EPSP_synth"/>
    <property type="match status" value="1"/>
</dbReference>
<dbReference type="InterPro" id="IPR001986">
    <property type="entry name" value="Enolpyruvate_Tfrase_dom"/>
</dbReference>
<dbReference type="InterPro" id="IPR036968">
    <property type="entry name" value="Enolpyruvate_Tfrase_sf"/>
</dbReference>
<dbReference type="InterPro" id="IPR006264">
    <property type="entry name" value="EPSP_synthase"/>
</dbReference>
<dbReference type="InterPro" id="IPR023193">
    <property type="entry name" value="EPSP_synthase_CS"/>
</dbReference>
<dbReference type="InterPro" id="IPR013792">
    <property type="entry name" value="RNA3'P_cycl/enolpyr_Trfase_a/b"/>
</dbReference>
<dbReference type="NCBIfam" id="TIGR01356">
    <property type="entry name" value="aroA"/>
    <property type="match status" value="1"/>
</dbReference>
<dbReference type="PANTHER" id="PTHR21090">
    <property type="entry name" value="AROM/DEHYDROQUINATE SYNTHASE"/>
    <property type="match status" value="1"/>
</dbReference>
<dbReference type="PANTHER" id="PTHR21090:SF5">
    <property type="entry name" value="PENTAFUNCTIONAL AROM POLYPEPTIDE"/>
    <property type="match status" value="1"/>
</dbReference>
<dbReference type="Pfam" id="PF00275">
    <property type="entry name" value="EPSP_synthase"/>
    <property type="match status" value="2"/>
</dbReference>
<dbReference type="PIRSF" id="PIRSF000505">
    <property type="entry name" value="EPSPS"/>
    <property type="match status" value="1"/>
</dbReference>
<dbReference type="SUPFAM" id="SSF55205">
    <property type="entry name" value="EPT/RTPC-like"/>
    <property type="match status" value="1"/>
</dbReference>
<dbReference type="PROSITE" id="PS00885">
    <property type="entry name" value="EPSP_SYNTHASE_2"/>
    <property type="match status" value="1"/>
</dbReference>
<sequence length="410" mass="45574">MRYLLSAPSQIKATIQLPASKSISNRALIIHALSKGDDVLSNLSDCDDTQVMIKALTEGNEVIDILAAGTAMRFLTAYLSSTPGIHTITGTERMQQRPIQILVNALRELGAHIEYVRNEGFPPLRIEGRELTGSEITLKGNVSSQYISALLMIGPVLKNGLQLRLTGEIVSRPYINLTLQLMKDFGASASWTSDQSILVDPQPYHCLPFTVESDWSAASYWYQIAALSPQANIELTGLFRHSYQGDSRGAEVFARLGVATEYTETGIRLKKNGTCVERLDEDFVDIPDLAQTFVVTCALLNVPFRFTGLQSLKIKETDRIEALKTEMKKLGYILHDKNDSILSWDGERVEQQACPVIKTYEDHRMAMAFAPAAIHYPTIQIDEPQVVSKSYPGYWNDLRKAGFGIKVGEE</sequence>